<proteinExistence type="inferred from homology"/>
<protein>
    <recommendedName>
        <fullName evidence="1">Large ribosomal subunit protein uL15</fullName>
    </recommendedName>
    <alternativeName>
        <fullName evidence="3">50S ribosomal protein L15</fullName>
    </alternativeName>
</protein>
<comment type="function">
    <text evidence="1">Binds to the 23S rRNA.</text>
</comment>
<comment type="subunit">
    <text evidence="1">Part of the 50S ribosomal subunit.</text>
</comment>
<comment type="similarity">
    <text evidence="1">Belongs to the universal ribosomal protein uL15 family.</text>
</comment>
<dbReference type="EMBL" id="CP001614">
    <property type="protein sequence ID" value="ACR10646.1"/>
    <property type="molecule type" value="Genomic_DNA"/>
</dbReference>
<dbReference type="RefSeq" id="WP_012779318.1">
    <property type="nucleotide sequence ID" value="NC_012997.1"/>
</dbReference>
<dbReference type="SMR" id="C5BQ80"/>
<dbReference type="STRING" id="377629.TERTU_0927"/>
<dbReference type="KEGG" id="ttu:TERTU_0927"/>
<dbReference type="eggNOG" id="COG0200">
    <property type="taxonomic scope" value="Bacteria"/>
</dbReference>
<dbReference type="HOGENOM" id="CLU_055188_4_2_6"/>
<dbReference type="OrthoDB" id="9810293at2"/>
<dbReference type="Proteomes" id="UP000009080">
    <property type="component" value="Chromosome"/>
</dbReference>
<dbReference type="GO" id="GO:0022625">
    <property type="term" value="C:cytosolic large ribosomal subunit"/>
    <property type="evidence" value="ECO:0007669"/>
    <property type="project" value="TreeGrafter"/>
</dbReference>
<dbReference type="GO" id="GO:0019843">
    <property type="term" value="F:rRNA binding"/>
    <property type="evidence" value="ECO:0007669"/>
    <property type="project" value="UniProtKB-UniRule"/>
</dbReference>
<dbReference type="GO" id="GO:0003735">
    <property type="term" value="F:structural constituent of ribosome"/>
    <property type="evidence" value="ECO:0007669"/>
    <property type="project" value="InterPro"/>
</dbReference>
<dbReference type="GO" id="GO:0006412">
    <property type="term" value="P:translation"/>
    <property type="evidence" value="ECO:0007669"/>
    <property type="project" value="UniProtKB-UniRule"/>
</dbReference>
<dbReference type="Gene3D" id="3.100.10.10">
    <property type="match status" value="1"/>
</dbReference>
<dbReference type="HAMAP" id="MF_01341">
    <property type="entry name" value="Ribosomal_uL15"/>
    <property type="match status" value="1"/>
</dbReference>
<dbReference type="InterPro" id="IPR030878">
    <property type="entry name" value="Ribosomal_uL15"/>
</dbReference>
<dbReference type="InterPro" id="IPR021131">
    <property type="entry name" value="Ribosomal_uL15/eL18"/>
</dbReference>
<dbReference type="InterPro" id="IPR036227">
    <property type="entry name" value="Ribosomal_uL15/eL18_sf"/>
</dbReference>
<dbReference type="InterPro" id="IPR005749">
    <property type="entry name" value="Ribosomal_uL15_bac-type"/>
</dbReference>
<dbReference type="NCBIfam" id="TIGR01071">
    <property type="entry name" value="rplO_bact"/>
    <property type="match status" value="1"/>
</dbReference>
<dbReference type="PANTHER" id="PTHR12934">
    <property type="entry name" value="50S RIBOSOMAL PROTEIN L15"/>
    <property type="match status" value="1"/>
</dbReference>
<dbReference type="PANTHER" id="PTHR12934:SF11">
    <property type="entry name" value="LARGE RIBOSOMAL SUBUNIT PROTEIN UL15M"/>
    <property type="match status" value="1"/>
</dbReference>
<dbReference type="Pfam" id="PF00828">
    <property type="entry name" value="Ribosomal_L27A"/>
    <property type="match status" value="1"/>
</dbReference>
<dbReference type="SUPFAM" id="SSF52080">
    <property type="entry name" value="Ribosomal proteins L15p and L18e"/>
    <property type="match status" value="1"/>
</dbReference>
<name>RL15_TERTT</name>
<accession>C5BQ80</accession>
<reference key="1">
    <citation type="journal article" date="2009" name="PLoS ONE">
        <title>The complete genome of Teredinibacter turnerae T7901: an intracellular endosymbiont of marine wood-boring bivalves (shipworms).</title>
        <authorList>
            <person name="Yang J.C."/>
            <person name="Madupu R."/>
            <person name="Durkin A.S."/>
            <person name="Ekborg N.A."/>
            <person name="Pedamallu C.S."/>
            <person name="Hostetler J.B."/>
            <person name="Radune D."/>
            <person name="Toms B.S."/>
            <person name="Henrissat B."/>
            <person name="Coutinho P.M."/>
            <person name="Schwarz S."/>
            <person name="Field L."/>
            <person name="Trindade-Silva A.E."/>
            <person name="Soares C.A.G."/>
            <person name="Elshahawi S."/>
            <person name="Hanora A."/>
            <person name="Schmidt E.W."/>
            <person name="Haygood M.G."/>
            <person name="Posfai J."/>
            <person name="Benner J."/>
            <person name="Madinger C."/>
            <person name="Nove J."/>
            <person name="Anton B."/>
            <person name="Chaudhary K."/>
            <person name="Foster J."/>
            <person name="Holman A."/>
            <person name="Kumar S."/>
            <person name="Lessard P.A."/>
            <person name="Luyten Y.A."/>
            <person name="Slatko B."/>
            <person name="Wood N."/>
            <person name="Wu B."/>
            <person name="Teplitski M."/>
            <person name="Mougous J.D."/>
            <person name="Ward N."/>
            <person name="Eisen J.A."/>
            <person name="Badger J.H."/>
            <person name="Distel D.L."/>
        </authorList>
    </citation>
    <scope>NUCLEOTIDE SEQUENCE [LARGE SCALE GENOMIC DNA]</scope>
    <source>
        <strain>ATCC 39867 / T7901</strain>
    </source>
</reference>
<organism>
    <name type="scientific">Teredinibacter turnerae (strain ATCC 39867 / T7901)</name>
    <dbReference type="NCBI Taxonomy" id="377629"/>
    <lineage>
        <taxon>Bacteria</taxon>
        <taxon>Pseudomonadati</taxon>
        <taxon>Pseudomonadota</taxon>
        <taxon>Gammaproteobacteria</taxon>
        <taxon>Cellvibrionales</taxon>
        <taxon>Cellvibrionaceae</taxon>
        <taxon>Teredinibacter</taxon>
    </lineage>
</organism>
<feature type="chain" id="PRO_1000214718" description="Large ribosomal subunit protein uL15">
    <location>
        <begin position="1"/>
        <end position="144"/>
    </location>
</feature>
<feature type="region of interest" description="Disordered" evidence="2">
    <location>
        <begin position="1"/>
        <end position="54"/>
    </location>
</feature>
<feature type="compositionally biased region" description="Gly residues" evidence="2">
    <location>
        <begin position="21"/>
        <end position="31"/>
    </location>
</feature>
<sequence length="144" mass="15120">MRLNTLSPAPGRVTSRKRVGRGIGSGLGKTAGRGHKGLKSRSGGTVKPGFEGGQMPLQKRLPKYGFTSRIGRVSAEIRLSELNKVEADVIDLDALLKADLISTNIKRAKIFLSGELKKAVTVKGLAVTKGAKAAIEAAGGKVEE</sequence>
<keyword id="KW-1185">Reference proteome</keyword>
<keyword id="KW-0687">Ribonucleoprotein</keyword>
<keyword id="KW-0689">Ribosomal protein</keyword>
<keyword id="KW-0694">RNA-binding</keyword>
<keyword id="KW-0699">rRNA-binding</keyword>
<gene>
    <name evidence="1" type="primary">rplO</name>
    <name type="ordered locus">TERTU_0927</name>
</gene>
<evidence type="ECO:0000255" key="1">
    <source>
        <dbReference type="HAMAP-Rule" id="MF_01341"/>
    </source>
</evidence>
<evidence type="ECO:0000256" key="2">
    <source>
        <dbReference type="SAM" id="MobiDB-lite"/>
    </source>
</evidence>
<evidence type="ECO:0000305" key="3"/>